<keyword id="KW-0325">Glycoprotein</keyword>
<keyword id="KW-0349">Heme</keyword>
<keyword id="KW-0408">Iron</keyword>
<keyword id="KW-0472">Membrane</keyword>
<keyword id="KW-0479">Metal-binding</keyword>
<keyword id="KW-0503">Monooxygenase</keyword>
<keyword id="KW-0560">Oxidoreductase</keyword>
<keyword id="KW-1185">Reference proteome</keyword>
<keyword id="KW-0812">Transmembrane</keyword>
<keyword id="KW-1133">Transmembrane helix</keyword>
<proteinExistence type="evidence at protein level"/>
<reference key="1">
    <citation type="journal article" date="2005" name="Nature">
        <title>The genome sequence of the rice blast fungus Magnaporthe grisea.</title>
        <authorList>
            <person name="Dean R.A."/>
            <person name="Talbot N.J."/>
            <person name="Ebbole D.J."/>
            <person name="Farman M.L."/>
            <person name="Mitchell T.K."/>
            <person name="Orbach M.J."/>
            <person name="Thon M.R."/>
            <person name="Kulkarni R."/>
            <person name="Xu J.-R."/>
            <person name="Pan H."/>
            <person name="Read N.D."/>
            <person name="Lee Y.-H."/>
            <person name="Carbone I."/>
            <person name="Brown D."/>
            <person name="Oh Y.Y."/>
            <person name="Donofrio N."/>
            <person name="Jeong J.S."/>
            <person name="Soanes D.M."/>
            <person name="Djonovic S."/>
            <person name="Kolomiets E."/>
            <person name="Rehmeyer C."/>
            <person name="Li W."/>
            <person name="Harding M."/>
            <person name="Kim S."/>
            <person name="Lebrun M.-H."/>
            <person name="Bohnert H."/>
            <person name="Coughlan S."/>
            <person name="Butler J."/>
            <person name="Calvo S.E."/>
            <person name="Ma L.-J."/>
            <person name="Nicol R."/>
            <person name="Purcell S."/>
            <person name="Nusbaum C."/>
            <person name="Galagan J.E."/>
            <person name="Birren B.W."/>
        </authorList>
    </citation>
    <scope>NUCLEOTIDE SEQUENCE [LARGE SCALE GENOMIC DNA]</scope>
    <source>
        <strain>70-15 / ATCC MYA-4617 / FGSC 8958</strain>
    </source>
</reference>
<reference key="2">
    <citation type="journal article" date="2008" name="New Phytol.">
        <title>Magnaporthe grisea avirulence gene ACE1 belongs to an infection-specific gene cluster involved in secondary metabolism.</title>
        <authorList>
            <person name="Collemare J."/>
            <person name="Pianfetti M."/>
            <person name="Houlle A.E."/>
            <person name="Morin D."/>
            <person name="Camborde L."/>
            <person name="Gagey M.J."/>
            <person name="Barbisan C."/>
            <person name="Fudal I."/>
            <person name="Lebrun M.H."/>
            <person name="Boehnert H.U."/>
        </authorList>
    </citation>
    <scope>FUNCTION</scope>
    <scope>INDUCTION</scope>
    <scope>PATHWAY</scope>
</reference>
<reference key="3">
    <citation type="journal article" date="2015" name="Chem. Sci.">
        <title>Heterologous expression of the avirulence gene ACE1 from the fungal rice pathogen Magnaporthe oryzae.</title>
        <authorList>
            <person name="Song Z."/>
            <person name="Bakeer W."/>
            <person name="Marshall J.W."/>
            <person name="Yakasai A.A."/>
            <person name="Khalid R.M."/>
            <person name="Collemare J."/>
            <person name="Skellam E."/>
            <person name="Tharreau D."/>
            <person name="Lebrun M.H."/>
            <person name="Lazarus C.M."/>
            <person name="Bailey A.M."/>
            <person name="Simpson T.J."/>
            <person name="Cox R.J."/>
        </authorList>
    </citation>
    <scope>FUNCTION</scope>
</reference>
<reference key="4">
    <citation type="journal article" date="2019" name="Org. Lett.">
        <title>Investigating the function of cryptic cytochalasan cytochrome P450 monooxygenases using combinatorial biosynthesis.</title>
        <authorList>
            <person name="Wang C."/>
            <person name="Becker K."/>
            <person name="Pfuetze S."/>
            <person name="Kuhnert E."/>
            <person name="Stadler M."/>
            <person name="Cox R.J."/>
            <person name="Skellam E."/>
        </authorList>
    </citation>
    <scope>FUNCTION</scope>
    <scope>CATALYTIC ACTIVITY</scope>
    <scope>PATHWAY</scope>
</reference>
<accession>G4MVZ7</accession>
<protein>
    <recommendedName>
        <fullName evidence="7">Cytochrome P450 monooxygenase CYP1</fullName>
        <ecNumber evidence="6">1.-.-.-</ecNumber>
    </recommendedName>
    <alternativeName>
        <fullName evidence="8">ACE1 cytochalasan biosynthesis cluster protein CYP1</fullName>
    </alternativeName>
</protein>
<sequence length="543" mass="61789">MMTPTELITHYRIVQHSFAPLRLSWWETNRVIAVQIWRDSSFFTRILIAFIGLCLLSIFSRLTRPRSLRRLGIPGAVQPRFSTWSLDFKKVLEDSAKKYPNSPFCLNAFGTEYAVLPSKCYDEVKRLPEHQASAFAFFREAFHGAWTGAGVQTPELGRTIAVELTRGIPSLVHWRQMDCAEAFKMCIGEPSEWREIQLFEAIQRIVISVNSSSFVGRELGTNQNWLRLIYNMPLQLGIPTVILGWTPFLLQPLLKPFLFAPLRMTQRKIKSMLRPVLENDVQEYEASSDKKNLLSPKEQGKVQLTGWLLSRYKGKLDFEVLLQDFITVLFESTPSTASTLFHVVCELAADPALQDMLRQELEEHTDNGSLPQTHLNELRKMDSVMRESARASPFSYLVLYRKLSIPTKLSMGPELPAGTNICVDAHHINTSPDLWDQPHTFDGLRHYRARQQPQNENRYKFANLGSDAPSWGDGLQACPGRMFADNTIKIILTHLLLNYDVKLRPGESKPEKGAMPNGSIVPDVWAKVLFRSRASSAVNEGKK</sequence>
<comment type="function">
    <text evidence="4 5 6 10 11">Cytochrome P450 monooxygenase; part of the gene cluster that mediates the biosynthesis of a tyrosine-derived cytochalasan acting as a fungal signal recognized by resistant rice plants and leads to avirulence in Pi33 resistant rice cultivars (PubMed:18433432, PubMed:31644300). The first step in the pathway is catalyzed by the hybrid PKS-NRPS ACE1, assisted by the enoyl reductase RAP1, that are responsible for fusion of the tyrosine precursor and the polyketide backbone (PubMed:29142718). The polyketide synthase module (PKS) of ACE1 is responsible for the synthesis of the polyketide backbone and the downstream nonribosomal peptide synthetase (NRPS) amidates the carboxyl end of the polyketide with the tyrosine precursor (PubMed:29142718). Because ACE1 lacks a designated enoylreductase (ER) domain, the required activity is provided the enoyl reductase RAP1 (PubMed:29142718). Reduction by the hydrolyase ORFZ, followed by dehydration and intra-molecular Diels-Alder cyclization by the Diels-Alderase ORF3 then yield the required isoindolone-fused macrocycle (Probable). A number of oxidative steps catalyzed by the tailoring enzymes identified within the cluster, including cytochrome P450 monooxygenases CYP1 to CYP4, the FAD-linked oxidoreductase OXR2 and the short-chain dehydrogenase/reductase OXR1, are further required to afford the final cytochalasans that confer avirulence and which have still to be identified (Probable). The monooxygenase CYP1 has been shown to be a site-selective C-18 hydroxylase whereas the function of CYP3 is the site-selective epoxidation of the C-6/C-7 olefin that is present in some intermediate compounds (PubMed:31644300). Finally, SYN2 and RAP2 are not required for avirulence in Pi33 resistant rice cultivars (PubMed:18433432).</text>
</comment>
<comment type="cofactor">
    <cofactor evidence="1">
        <name>heme</name>
        <dbReference type="ChEBI" id="CHEBI:30413"/>
    </cofactor>
</comment>
<comment type="pathway">
    <text evidence="6 10">Secondary metabolite biosynthesis.</text>
</comment>
<comment type="subcellular location">
    <subcellularLocation>
        <location evidence="2">Membrane</location>
        <topology evidence="2">Single-pass membrane protein</topology>
    </subcellularLocation>
</comment>
<comment type="induction">
    <text evidence="4">Expressed exclusively during fungal penetration of host leaves, the time point at which plant defense reactions are triggered.</text>
</comment>
<comment type="similarity">
    <text evidence="9">Belongs to the cytochrome P450 family.</text>
</comment>
<name>CYP1B_PYRO7</name>
<evidence type="ECO:0000250" key="1">
    <source>
        <dbReference type="UniProtKB" id="P04798"/>
    </source>
</evidence>
<evidence type="ECO:0000255" key="2"/>
<evidence type="ECO:0000255" key="3">
    <source>
        <dbReference type="PROSITE-ProRule" id="PRU00498"/>
    </source>
</evidence>
<evidence type="ECO:0000269" key="4">
    <source>
    </source>
</evidence>
<evidence type="ECO:0000269" key="5">
    <source>
    </source>
</evidence>
<evidence type="ECO:0000269" key="6">
    <source>
    </source>
</evidence>
<evidence type="ECO:0000303" key="7">
    <source>
    </source>
</evidence>
<evidence type="ECO:0000303" key="8">
    <source>
    </source>
</evidence>
<evidence type="ECO:0000305" key="9"/>
<evidence type="ECO:0000305" key="10">
    <source>
    </source>
</evidence>
<evidence type="ECO:0000305" key="11">
    <source>
    </source>
</evidence>
<gene>
    <name evidence="7" type="primary">CYP1</name>
    <name type="ORF">MGG_08387</name>
</gene>
<organism>
    <name type="scientific">Pyricularia oryzae (strain 70-15 / ATCC MYA-4617 / FGSC 8958)</name>
    <name type="common">Rice blast fungus</name>
    <name type="synonym">Magnaporthe oryzae</name>
    <dbReference type="NCBI Taxonomy" id="242507"/>
    <lineage>
        <taxon>Eukaryota</taxon>
        <taxon>Fungi</taxon>
        <taxon>Dikarya</taxon>
        <taxon>Ascomycota</taxon>
        <taxon>Pezizomycotina</taxon>
        <taxon>Sordariomycetes</taxon>
        <taxon>Sordariomycetidae</taxon>
        <taxon>Magnaporthales</taxon>
        <taxon>Pyriculariaceae</taxon>
        <taxon>Pyricularia</taxon>
    </lineage>
</organism>
<dbReference type="EC" id="1.-.-.-" evidence="6"/>
<dbReference type="EMBL" id="CM001232">
    <property type="protein sequence ID" value="EHA55865.1"/>
    <property type="molecule type" value="Genomic_DNA"/>
</dbReference>
<dbReference type="RefSeq" id="XP_003715672.1">
    <property type="nucleotide sequence ID" value="XM_003715624.1"/>
</dbReference>
<dbReference type="SMR" id="G4MVZ7"/>
<dbReference type="GlyCosmos" id="G4MVZ7">
    <property type="glycosylation" value="3 sites, No reported glycans"/>
</dbReference>
<dbReference type="EnsemblFungi" id="MGG_08387T0">
    <property type="protein sequence ID" value="MGG_08387T0"/>
    <property type="gene ID" value="MGG_08387"/>
</dbReference>
<dbReference type="GeneID" id="2678617"/>
<dbReference type="KEGG" id="mgr:MGG_08387"/>
<dbReference type="VEuPathDB" id="FungiDB:MGG_08387"/>
<dbReference type="eggNOG" id="KOG0157">
    <property type="taxonomic scope" value="Eukaryota"/>
</dbReference>
<dbReference type="HOGENOM" id="CLU_022195_0_2_1"/>
<dbReference type="InParanoid" id="G4MVZ7"/>
<dbReference type="OMA" id="NRFKFAN"/>
<dbReference type="OrthoDB" id="1844152at2759"/>
<dbReference type="Proteomes" id="UP000009058">
    <property type="component" value="Chromosome 2"/>
</dbReference>
<dbReference type="GO" id="GO:0016020">
    <property type="term" value="C:membrane"/>
    <property type="evidence" value="ECO:0007669"/>
    <property type="project" value="UniProtKB-SubCell"/>
</dbReference>
<dbReference type="GO" id="GO:0020037">
    <property type="term" value="F:heme binding"/>
    <property type="evidence" value="ECO:0007669"/>
    <property type="project" value="InterPro"/>
</dbReference>
<dbReference type="GO" id="GO:0005506">
    <property type="term" value="F:iron ion binding"/>
    <property type="evidence" value="ECO:0007669"/>
    <property type="project" value="InterPro"/>
</dbReference>
<dbReference type="GO" id="GO:0004497">
    <property type="term" value="F:monooxygenase activity"/>
    <property type="evidence" value="ECO:0007669"/>
    <property type="project" value="UniProtKB-KW"/>
</dbReference>
<dbReference type="GO" id="GO:0016705">
    <property type="term" value="F:oxidoreductase activity, acting on paired donors, with incorporation or reduction of molecular oxygen"/>
    <property type="evidence" value="ECO:0007669"/>
    <property type="project" value="InterPro"/>
</dbReference>
<dbReference type="GO" id="GO:0019748">
    <property type="term" value="P:secondary metabolic process"/>
    <property type="evidence" value="ECO:0007669"/>
    <property type="project" value="UniProtKB-ARBA"/>
</dbReference>
<dbReference type="CDD" id="cd11041">
    <property type="entry name" value="CYP503A1-like"/>
    <property type="match status" value="1"/>
</dbReference>
<dbReference type="Gene3D" id="1.10.630.10">
    <property type="entry name" value="Cytochrome P450"/>
    <property type="match status" value="1"/>
</dbReference>
<dbReference type="InterPro" id="IPR001128">
    <property type="entry name" value="Cyt_P450"/>
</dbReference>
<dbReference type="InterPro" id="IPR036396">
    <property type="entry name" value="Cyt_P450_sf"/>
</dbReference>
<dbReference type="PANTHER" id="PTHR46206">
    <property type="entry name" value="CYTOCHROME P450"/>
    <property type="match status" value="1"/>
</dbReference>
<dbReference type="PANTHER" id="PTHR46206:SF6">
    <property type="entry name" value="CYTOCHROME P450 MONOOXYGENASE AN1598-RELATED"/>
    <property type="match status" value="1"/>
</dbReference>
<dbReference type="Pfam" id="PF00067">
    <property type="entry name" value="p450"/>
    <property type="match status" value="1"/>
</dbReference>
<dbReference type="SUPFAM" id="SSF48264">
    <property type="entry name" value="Cytochrome P450"/>
    <property type="match status" value="1"/>
</dbReference>
<feature type="chain" id="PRO_0000449436" description="Cytochrome P450 monooxygenase CYP1">
    <location>
        <begin position="1"/>
        <end position="543"/>
    </location>
</feature>
<feature type="transmembrane region" description="Helical" evidence="2">
    <location>
        <begin position="40"/>
        <end position="60"/>
    </location>
</feature>
<feature type="binding site" description="axial binding residue" evidence="1">
    <location>
        <position position="478"/>
    </location>
    <ligand>
        <name>heme</name>
        <dbReference type="ChEBI" id="CHEBI:30413"/>
    </ligand>
    <ligandPart>
        <name>Fe</name>
        <dbReference type="ChEBI" id="CHEBI:18248"/>
    </ligandPart>
</feature>
<feature type="glycosylation site" description="N-linked (GlcNAc...) asparagine" evidence="3">
    <location>
        <position position="210"/>
    </location>
</feature>
<feature type="glycosylation site" description="N-linked (GlcNAc...) asparagine" evidence="3">
    <location>
        <position position="367"/>
    </location>
</feature>
<feature type="glycosylation site" description="N-linked (GlcNAc...) asparagine" evidence="3">
    <location>
        <position position="517"/>
    </location>
</feature>